<protein>
    <recommendedName>
        <fullName>Probable cytosolic Fe-S cluster assembly factor GH10760</fullName>
    </recommendedName>
</protein>
<evidence type="ECO:0000250" key="1"/>
<evidence type="ECO:0000255" key="2"/>
<evidence type="ECO:0000305" key="3"/>
<feature type="chain" id="PRO_0000383701" description="Probable cytosolic Fe-S cluster assembly factor GH10760">
    <location>
        <begin position="1"/>
        <end position="476"/>
    </location>
</feature>
<feature type="binding site" evidence="2">
    <location>
        <position position="23"/>
    </location>
    <ligand>
        <name>[4Fe-4S] cluster</name>
        <dbReference type="ChEBI" id="CHEBI:49883"/>
        <label>1</label>
    </ligand>
</feature>
<feature type="binding site" evidence="2">
    <location>
        <position position="68"/>
    </location>
    <ligand>
        <name>[4Fe-4S] cluster</name>
        <dbReference type="ChEBI" id="CHEBI:49883"/>
        <label>1</label>
    </ligand>
</feature>
<feature type="binding site" evidence="2">
    <location>
        <position position="71"/>
    </location>
    <ligand>
        <name>[4Fe-4S] cluster</name>
        <dbReference type="ChEBI" id="CHEBI:49883"/>
        <label>1</label>
    </ligand>
</feature>
<feature type="binding site" evidence="2">
    <location>
        <position position="74"/>
    </location>
    <ligand>
        <name>[4Fe-4S] cluster</name>
        <dbReference type="ChEBI" id="CHEBI:49883"/>
        <label>1</label>
    </ligand>
</feature>
<feature type="binding site" evidence="2">
    <location>
        <position position="187"/>
    </location>
    <ligand>
        <name>[4Fe-4S] cluster</name>
        <dbReference type="ChEBI" id="CHEBI:49883"/>
        <label>2</label>
    </ligand>
</feature>
<feature type="binding site" evidence="2">
    <location>
        <position position="243"/>
    </location>
    <ligand>
        <name>[4Fe-4S] cluster</name>
        <dbReference type="ChEBI" id="CHEBI:49883"/>
        <label>2</label>
    </ligand>
</feature>
<feature type="binding site" evidence="2">
    <location>
        <position position="395"/>
    </location>
    <ligand>
        <name>[4Fe-4S] cluster</name>
        <dbReference type="ChEBI" id="CHEBI:49883"/>
        <label>2</label>
    </ligand>
</feature>
<feature type="binding site" evidence="2">
    <location>
        <position position="399"/>
    </location>
    <ligand>
        <name>[4Fe-4S] cluster</name>
        <dbReference type="ChEBI" id="CHEBI:49883"/>
        <label>2</label>
    </ligand>
</feature>
<keyword id="KW-0004">4Fe-4S</keyword>
<keyword id="KW-0408">Iron</keyword>
<keyword id="KW-0411">Iron-sulfur</keyword>
<keyword id="KW-0479">Metal-binding</keyword>
<keyword id="KW-1185">Reference proteome</keyword>
<sequence>MSRFSGALQLTDLDDFITPSQECIKPVTIDKTKSKTGAKITVEADGYYEESESGKQKLQKVEITLQDCLACSGCITSAEGVLITQQSQEELLKVLRENQTLKASGDNEQVRTIVFTISVQPLLSLAHRYDLSLEEAGRHLAGYLQQLGADYVLCTKIADDLALLECRQEFVERFRNNAELSMLSSSCPGWVCYAEKTHGNFILPHIATTRSPQQIMGVLVKQLLAEKLGVSGSRIYHVTIMPCYDKKLEASREDFYSEVSSSRDVDCVITAIEVEQMLQAEEQTLQQFEPKDLHWPWTDQQPESMLWAHESTMSGGYAEHIFKYAAKELFNEDTPTELQFRALRNRDFSEICLEKEGKVLLKFAIANGFRNIQNLVQKLKRGKGPGYQFVEVMACPSGCINGGAQVRPTTGQHVRQLTQQLEELYKQLPRSNPDNTHTKQIYADFFDGTHTDKSAQLLHTSYHAVEKLNTALNIKW</sequence>
<organism>
    <name type="scientific">Drosophila grimshawi</name>
    <name type="common">Hawaiian fruit fly</name>
    <name type="synonym">Idiomyia grimshawi</name>
    <dbReference type="NCBI Taxonomy" id="7222"/>
    <lineage>
        <taxon>Eukaryota</taxon>
        <taxon>Metazoa</taxon>
        <taxon>Ecdysozoa</taxon>
        <taxon>Arthropoda</taxon>
        <taxon>Hexapoda</taxon>
        <taxon>Insecta</taxon>
        <taxon>Pterygota</taxon>
        <taxon>Neoptera</taxon>
        <taxon>Endopterygota</taxon>
        <taxon>Diptera</taxon>
        <taxon>Brachycera</taxon>
        <taxon>Muscomorpha</taxon>
        <taxon>Ephydroidea</taxon>
        <taxon>Drosophilidae</taxon>
        <taxon>Drosophila</taxon>
        <taxon>Hawaiian Drosophila</taxon>
    </lineage>
</organism>
<gene>
    <name type="ORF">GH10760</name>
</gene>
<dbReference type="EMBL" id="CH916368">
    <property type="protein sequence ID" value="EDW02951.1"/>
    <property type="molecule type" value="Genomic_DNA"/>
</dbReference>
<dbReference type="SMR" id="B4JBE6"/>
<dbReference type="FunCoup" id="B4JBE6">
    <property type="interactions" value="485"/>
</dbReference>
<dbReference type="STRING" id="7222.B4JBE6"/>
<dbReference type="EnsemblMetazoa" id="FBtr0146174">
    <property type="protein sequence ID" value="FBpp0144666"/>
    <property type="gene ID" value="FBgn0118241"/>
</dbReference>
<dbReference type="EnsemblMetazoa" id="XM_001988048.3">
    <property type="protein sequence ID" value="XP_001988084.1"/>
    <property type="gene ID" value="LOC6561929"/>
</dbReference>
<dbReference type="GeneID" id="6561929"/>
<dbReference type="KEGG" id="dgr:6561929"/>
<dbReference type="eggNOG" id="KOG2439">
    <property type="taxonomic scope" value="Eukaryota"/>
</dbReference>
<dbReference type="HOGENOM" id="CLU_018240_0_0_1"/>
<dbReference type="InParanoid" id="B4JBE6"/>
<dbReference type="OMA" id="GYLHHVL"/>
<dbReference type="OrthoDB" id="10253113at2759"/>
<dbReference type="PhylomeDB" id="B4JBE6"/>
<dbReference type="Proteomes" id="UP000001070">
    <property type="component" value="Unassembled WGS sequence"/>
</dbReference>
<dbReference type="GO" id="GO:0051539">
    <property type="term" value="F:4 iron, 4 sulfur cluster binding"/>
    <property type="evidence" value="ECO:0007669"/>
    <property type="project" value="UniProtKB-KW"/>
</dbReference>
<dbReference type="GO" id="GO:0046872">
    <property type="term" value="F:metal ion binding"/>
    <property type="evidence" value="ECO:0007669"/>
    <property type="project" value="UniProtKB-KW"/>
</dbReference>
<dbReference type="GO" id="GO:0016226">
    <property type="term" value="P:iron-sulfur cluster assembly"/>
    <property type="evidence" value="ECO:0000250"/>
    <property type="project" value="UniProtKB"/>
</dbReference>
<dbReference type="FunFam" id="3.30.70.20:FF:000042">
    <property type="entry name" value="Cytosolic Fe-S cluster assembly factor NAR1"/>
    <property type="match status" value="1"/>
</dbReference>
<dbReference type="Gene3D" id="3.40.50.1780">
    <property type="match status" value="1"/>
</dbReference>
<dbReference type="Gene3D" id="3.40.950.10">
    <property type="entry name" value="Fe-only Hydrogenase (Larger Subunit), Chain L, domain 3"/>
    <property type="match status" value="1"/>
</dbReference>
<dbReference type="InterPro" id="IPR050340">
    <property type="entry name" value="Cytosolic_Fe-S_CAF"/>
</dbReference>
<dbReference type="InterPro" id="IPR009016">
    <property type="entry name" value="Fe_hydrogenase"/>
</dbReference>
<dbReference type="InterPro" id="IPR004108">
    <property type="entry name" value="Fe_hydrogenase_lsu_C"/>
</dbReference>
<dbReference type="InterPro" id="IPR003149">
    <property type="entry name" value="Fe_hydrogenase_ssu"/>
</dbReference>
<dbReference type="PANTHER" id="PTHR11615">
    <property type="entry name" value="NITRATE, FORMATE, IRON DEHYDROGENASE"/>
    <property type="match status" value="1"/>
</dbReference>
<dbReference type="Pfam" id="PF02906">
    <property type="entry name" value="Fe_hyd_lg_C"/>
    <property type="match status" value="1"/>
</dbReference>
<dbReference type="Pfam" id="PF02256">
    <property type="entry name" value="Fe_hyd_SSU"/>
    <property type="match status" value="1"/>
</dbReference>
<dbReference type="SMART" id="SM00902">
    <property type="entry name" value="Fe_hyd_SSU"/>
    <property type="match status" value="1"/>
</dbReference>
<dbReference type="SUPFAM" id="SSF53920">
    <property type="entry name" value="Fe-only hydrogenase"/>
    <property type="match status" value="1"/>
</dbReference>
<comment type="function">
    <text evidence="1">Component of the cytosolic iron-sulfur (Fe/S) protein assembly machinery. Required for maturation of extramitochondrial Fe/S proteins (By similarity).</text>
</comment>
<comment type="similarity">
    <text evidence="3">Belongs to the NARF family.</text>
</comment>
<accession>B4JBE6</accession>
<name>NARF_DROGR</name>
<reference key="1">
    <citation type="journal article" date="2007" name="Nature">
        <title>Evolution of genes and genomes on the Drosophila phylogeny.</title>
        <authorList>
            <consortium name="Drosophila 12 genomes consortium"/>
        </authorList>
    </citation>
    <scope>NUCLEOTIDE SEQUENCE [LARGE SCALE GENOMIC DNA]</scope>
    <source>
        <strain>Tucson 15287-2541.00</strain>
    </source>
</reference>
<proteinExistence type="inferred from homology"/>